<protein>
    <recommendedName>
        <fullName evidence="1">Na(+)-translocating NADH-quinone reductase subunit D</fullName>
        <shortName evidence="1">Na(+)-NQR subunit D</shortName>
        <shortName evidence="1">Na(+)-translocating NQR subunit D</shortName>
        <ecNumber evidence="1">7.2.1.1</ecNumber>
    </recommendedName>
    <alternativeName>
        <fullName evidence="1">NQR complex subunit D</fullName>
    </alternativeName>
    <alternativeName>
        <fullName evidence="1">NQR-1 subunit D</fullName>
    </alternativeName>
</protein>
<comment type="function">
    <text evidence="1">NQR complex catalyzes the reduction of ubiquinone-1 to ubiquinol by two successive reactions, coupled with the transport of Na(+) ions from the cytoplasm to the periplasm. NqrA to NqrE are probably involved in the second step, the conversion of ubisemiquinone to ubiquinol.</text>
</comment>
<comment type="catalytic activity">
    <reaction evidence="1">
        <text>a ubiquinone + n Na(+)(in) + NADH + H(+) = a ubiquinol + n Na(+)(out) + NAD(+)</text>
        <dbReference type="Rhea" id="RHEA:47748"/>
        <dbReference type="Rhea" id="RHEA-COMP:9565"/>
        <dbReference type="Rhea" id="RHEA-COMP:9566"/>
        <dbReference type="ChEBI" id="CHEBI:15378"/>
        <dbReference type="ChEBI" id="CHEBI:16389"/>
        <dbReference type="ChEBI" id="CHEBI:17976"/>
        <dbReference type="ChEBI" id="CHEBI:29101"/>
        <dbReference type="ChEBI" id="CHEBI:57540"/>
        <dbReference type="ChEBI" id="CHEBI:57945"/>
        <dbReference type="EC" id="7.2.1.1"/>
    </reaction>
</comment>
<comment type="subunit">
    <text evidence="1">Composed of six subunits; NqrA, NqrB, NqrC, NqrD, NqrE and NqrF.</text>
</comment>
<comment type="subcellular location">
    <subcellularLocation>
        <location evidence="1">Cell inner membrane</location>
        <topology evidence="1">Multi-pass membrane protein</topology>
    </subcellularLocation>
</comment>
<comment type="similarity">
    <text evidence="1">Belongs to the NqrDE/RnfAE family.</text>
</comment>
<organism>
    <name type="scientific">Vibrio parahaemolyticus serotype O3:K6 (strain RIMD 2210633)</name>
    <dbReference type="NCBI Taxonomy" id="223926"/>
    <lineage>
        <taxon>Bacteria</taxon>
        <taxon>Pseudomonadati</taxon>
        <taxon>Pseudomonadota</taxon>
        <taxon>Gammaproteobacteria</taxon>
        <taxon>Vibrionales</taxon>
        <taxon>Vibrionaceae</taxon>
        <taxon>Vibrio</taxon>
    </lineage>
</organism>
<evidence type="ECO:0000255" key="1">
    <source>
        <dbReference type="HAMAP-Rule" id="MF_00428"/>
    </source>
</evidence>
<accession>Q87MA9</accession>
<gene>
    <name evidence="1" type="primary">nqrD</name>
    <name type="ordered locus">VP2348</name>
</gene>
<sequence>MSSAQNIKKSIMAPVLDNNPIALQVLGVCSALAVTTKLETAFVMTLAVTFVTALSNFSVSLIRNHIPNSVRIIVQMAIIASLVIVVDQVLKAYLYDISKQLSVFVGLIITNCIVMGRAEAFAMKSAPVPSLIDGIGNGLGYGFVLITVGFFRELFGSGKLFGMEVLPLVSNGGWYQPNGLMLLAPSAFFLIGFLIWVIRVFKPEQVEAKE</sequence>
<proteinExistence type="inferred from homology"/>
<feature type="chain" id="PRO_0000214243" description="Na(+)-translocating NADH-quinone reductase subunit D">
    <location>
        <begin position="1"/>
        <end position="210"/>
    </location>
</feature>
<feature type="transmembrane region" description="Helical" evidence="1">
    <location>
        <begin position="42"/>
        <end position="62"/>
    </location>
</feature>
<feature type="transmembrane region" description="Helical" evidence="1">
    <location>
        <begin position="72"/>
        <end position="92"/>
    </location>
</feature>
<feature type="transmembrane region" description="Helical" evidence="1">
    <location>
        <begin position="103"/>
        <end position="123"/>
    </location>
</feature>
<feature type="transmembrane region" description="Helical" evidence="1">
    <location>
        <begin position="131"/>
        <end position="151"/>
    </location>
</feature>
<feature type="transmembrane region" description="Helical" evidence="1">
    <location>
        <begin position="178"/>
        <end position="198"/>
    </location>
</feature>
<reference key="1">
    <citation type="journal article" date="2003" name="Lancet">
        <title>Genome sequence of Vibrio parahaemolyticus: a pathogenic mechanism distinct from that of V. cholerae.</title>
        <authorList>
            <person name="Makino K."/>
            <person name="Oshima K."/>
            <person name="Kurokawa K."/>
            <person name="Yokoyama K."/>
            <person name="Uda T."/>
            <person name="Tagomori K."/>
            <person name="Iijima Y."/>
            <person name="Najima M."/>
            <person name="Nakano M."/>
            <person name="Yamashita A."/>
            <person name="Kubota Y."/>
            <person name="Kimura S."/>
            <person name="Yasunaga T."/>
            <person name="Honda T."/>
            <person name="Shinagawa H."/>
            <person name="Hattori M."/>
            <person name="Iida T."/>
        </authorList>
    </citation>
    <scope>NUCLEOTIDE SEQUENCE [LARGE SCALE GENOMIC DNA]</scope>
    <source>
        <strain>RIMD 2210633</strain>
    </source>
</reference>
<name>NQRD_VIBPA</name>
<keyword id="KW-0997">Cell inner membrane</keyword>
<keyword id="KW-1003">Cell membrane</keyword>
<keyword id="KW-0406">Ion transport</keyword>
<keyword id="KW-0472">Membrane</keyword>
<keyword id="KW-0520">NAD</keyword>
<keyword id="KW-0915">Sodium</keyword>
<keyword id="KW-0739">Sodium transport</keyword>
<keyword id="KW-1278">Translocase</keyword>
<keyword id="KW-0812">Transmembrane</keyword>
<keyword id="KW-1133">Transmembrane helix</keyword>
<keyword id="KW-0813">Transport</keyword>
<keyword id="KW-0830">Ubiquinone</keyword>
<dbReference type="EC" id="7.2.1.1" evidence="1"/>
<dbReference type="EMBL" id="BA000031">
    <property type="protein sequence ID" value="BAC60611.1"/>
    <property type="molecule type" value="Genomic_DNA"/>
</dbReference>
<dbReference type="RefSeq" id="NP_798727.1">
    <property type="nucleotide sequence ID" value="NC_004603.1"/>
</dbReference>
<dbReference type="RefSeq" id="WP_005456515.1">
    <property type="nucleotide sequence ID" value="NC_004603.1"/>
</dbReference>
<dbReference type="SMR" id="Q87MA9"/>
<dbReference type="GeneID" id="1189861"/>
<dbReference type="KEGG" id="vpa:VP2348"/>
<dbReference type="PATRIC" id="fig|223926.6.peg.2251"/>
<dbReference type="eggNOG" id="COG1347">
    <property type="taxonomic scope" value="Bacteria"/>
</dbReference>
<dbReference type="HOGENOM" id="CLU_046659_1_1_6"/>
<dbReference type="Proteomes" id="UP000002493">
    <property type="component" value="Chromosome 1"/>
</dbReference>
<dbReference type="GO" id="GO:0005886">
    <property type="term" value="C:plasma membrane"/>
    <property type="evidence" value="ECO:0007669"/>
    <property type="project" value="UniProtKB-SubCell"/>
</dbReference>
<dbReference type="GO" id="GO:0016655">
    <property type="term" value="F:oxidoreductase activity, acting on NAD(P)H, quinone or similar compound as acceptor"/>
    <property type="evidence" value="ECO:0007669"/>
    <property type="project" value="UniProtKB-UniRule"/>
</dbReference>
<dbReference type="GO" id="GO:0006814">
    <property type="term" value="P:sodium ion transport"/>
    <property type="evidence" value="ECO:0007669"/>
    <property type="project" value="UniProtKB-UniRule"/>
</dbReference>
<dbReference type="HAMAP" id="MF_00428">
    <property type="entry name" value="NqrD"/>
    <property type="match status" value="1"/>
</dbReference>
<dbReference type="InterPro" id="IPR011292">
    <property type="entry name" value="NqrD"/>
</dbReference>
<dbReference type="InterPro" id="IPR003667">
    <property type="entry name" value="NqrDE/RnfAE"/>
</dbReference>
<dbReference type="NCBIfam" id="TIGR01939">
    <property type="entry name" value="nqrD"/>
    <property type="match status" value="1"/>
</dbReference>
<dbReference type="NCBIfam" id="NF006777">
    <property type="entry name" value="PRK09292.1"/>
    <property type="match status" value="1"/>
</dbReference>
<dbReference type="NCBIfam" id="NF009070">
    <property type="entry name" value="PRK12405.1"/>
    <property type="match status" value="1"/>
</dbReference>
<dbReference type="PANTHER" id="PTHR30586">
    <property type="entry name" value="ELECTRON TRANSPORT COMPLEX PROTEIN RNFE"/>
    <property type="match status" value="1"/>
</dbReference>
<dbReference type="PANTHER" id="PTHR30586:SF1">
    <property type="entry name" value="NA(+)-TRANSLOCATING NADH-QUINONE REDUCTASE SUBUNIT D"/>
    <property type="match status" value="1"/>
</dbReference>
<dbReference type="Pfam" id="PF02508">
    <property type="entry name" value="Rnf-Nqr"/>
    <property type="match status" value="1"/>
</dbReference>
<dbReference type="PIRSF" id="PIRSF006102">
    <property type="entry name" value="NQR_DE"/>
    <property type="match status" value="1"/>
</dbReference>